<reference key="1">
    <citation type="submission" date="2004-09" db="EMBL/GenBank/DDBJ databases">
        <authorList>
            <consortium name="NIH - Xenopus Gene Collection (XGC) project"/>
        </authorList>
    </citation>
    <scope>NUCLEOTIDE SEQUENCE [LARGE SCALE MRNA]</scope>
    <source>
        <tissue>Kidney</tissue>
    </source>
</reference>
<dbReference type="EMBL" id="BC082394">
    <property type="protein sequence ID" value="AAH82394.1"/>
    <property type="molecule type" value="mRNA"/>
</dbReference>
<dbReference type="RefSeq" id="NP_001087866.1">
    <property type="nucleotide sequence ID" value="NM_001094397.1"/>
</dbReference>
<dbReference type="SMR" id="Q641E3"/>
<dbReference type="DNASU" id="447727"/>
<dbReference type="GeneID" id="447727"/>
<dbReference type="KEGG" id="xla:447727"/>
<dbReference type="AGR" id="Xenbase:XB-GENE-982916"/>
<dbReference type="CTD" id="447727"/>
<dbReference type="Xenbase" id="XB-GENE-982916">
    <property type="gene designation" value="acbd5.L"/>
</dbReference>
<dbReference type="OrthoDB" id="71307at2759"/>
<dbReference type="Proteomes" id="UP000186698">
    <property type="component" value="Chromosome 6L"/>
</dbReference>
<dbReference type="Bgee" id="447727">
    <property type="expression patterns" value="Expressed in kidney and 19 other cell types or tissues"/>
</dbReference>
<dbReference type="GO" id="GO:0005737">
    <property type="term" value="C:cytoplasm"/>
    <property type="evidence" value="ECO:0000318"/>
    <property type="project" value="GO_Central"/>
</dbReference>
<dbReference type="GO" id="GO:0005778">
    <property type="term" value="C:peroxisomal membrane"/>
    <property type="evidence" value="ECO:0007669"/>
    <property type="project" value="UniProtKB-SubCell"/>
</dbReference>
<dbReference type="GO" id="GO:0005777">
    <property type="term" value="C:peroxisome"/>
    <property type="evidence" value="ECO:0000318"/>
    <property type="project" value="GO_Central"/>
</dbReference>
<dbReference type="GO" id="GO:0000062">
    <property type="term" value="F:fatty-acyl-CoA binding"/>
    <property type="evidence" value="ECO:0000318"/>
    <property type="project" value="GO_Central"/>
</dbReference>
<dbReference type="GO" id="GO:0006631">
    <property type="term" value="P:fatty acid metabolic process"/>
    <property type="evidence" value="ECO:0000318"/>
    <property type="project" value="GO_Central"/>
</dbReference>
<dbReference type="GO" id="GO:0000425">
    <property type="term" value="P:pexophagy"/>
    <property type="evidence" value="ECO:0007669"/>
    <property type="project" value="InterPro"/>
</dbReference>
<dbReference type="CDD" id="cd00435">
    <property type="entry name" value="ACBP"/>
    <property type="match status" value="1"/>
</dbReference>
<dbReference type="FunFam" id="1.20.80.10:FF:000010">
    <property type="entry name" value="Acyl-CoA-binding domain-containing protein 5"/>
    <property type="match status" value="1"/>
</dbReference>
<dbReference type="Gene3D" id="1.20.80.10">
    <property type="match status" value="1"/>
</dbReference>
<dbReference type="InterPro" id="IPR016347">
    <property type="entry name" value="ACBD5"/>
</dbReference>
<dbReference type="InterPro" id="IPR022408">
    <property type="entry name" value="Acyl-CoA-binding_prot_CS"/>
</dbReference>
<dbReference type="InterPro" id="IPR000582">
    <property type="entry name" value="Acyl-CoA-binding_protein"/>
</dbReference>
<dbReference type="InterPro" id="IPR035984">
    <property type="entry name" value="Acyl-CoA-binding_sf"/>
</dbReference>
<dbReference type="InterPro" id="IPR014352">
    <property type="entry name" value="FERM/acyl-CoA-bd_prot_sf"/>
</dbReference>
<dbReference type="PANTHER" id="PTHR23310:SF6">
    <property type="entry name" value="ACYL-COA-BINDING DOMAIN-CONTAINING PROTEIN 5"/>
    <property type="match status" value="1"/>
</dbReference>
<dbReference type="PANTHER" id="PTHR23310">
    <property type="entry name" value="ACYL-COA-BINDING PROTEIN, ACBP"/>
    <property type="match status" value="1"/>
</dbReference>
<dbReference type="Pfam" id="PF00887">
    <property type="entry name" value="ACBP"/>
    <property type="match status" value="1"/>
</dbReference>
<dbReference type="PIRSF" id="PIRSF002412">
    <property type="entry name" value="MA_DBI"/>
    <property type="match status" value="1"/>
</dbReference>
<dbReference type="PRINTS" id="PR00689">
    <property type="entry name" value="ACOABINDINGP"/>
</dbReference>
<dbReference type="SUPFAM" id="SSF47027">
    <property type="entry name" value="Acyl-CoA binding protein"/>
    <property type="match status" value="1"/>
</dbReference>
<dbReference type="PROSITE" id="PS00880">
    <property type="entry name" value="ACB_1"/>
    <property type="match status" value="1"/>
</dbReference>
<dbReference type="PROSITE" id="PS51228">
    <property type="entry name" value="ACB_2"/>
    <property type="match status" value="1"/>
</dbReference>
<comment type="function">
    <text evidence="1">Acyl-CoA binding protein which acts as the peroxisome receptor for pexophagy but is dispensable for aggrephagy and nonselective autophagy. Binds medium- and long-chain acyl-CoA esters (By similarity).</text>
</comment>
<comment type="subcellular location">
    <subcellularLocation>
        <location evidence="1">Peroxisome membrane</location>
        <topology evidence="1">Single-pass membrane protein</topology>
    </subcellularLocation>
</comment>
<comment type="similarity">
    <text evidence="5">Belongs to the ATG37 family.</text>
</comment>
<keyword id="KW-0072">Autophagy</keyword>
<keyword id="KW-0175">Coiled coil</keyword>
<keyword id="KW-0446">Lipid-binding</keyword>
<keyword id="KW-0472">Membrane</keyword>
<keyword id="KW-0576">Peroxisome</keyword>
<keyword id="KW-1185">Reference proteome</keyword>
<keyword id="KW-0812">Transmembrane</keyword>
<keyword id="KW-1133">Transmembrane helix</keyword>
<keyword id="KW-0813">Transport</keyword>
<evidence type="ECO:0000250" key="1"/>
<evidence type="ECO:0000255" key="2"/>
<evidence type="ECO:0000255" key="3">
    <source>
        <dbReference type="PROSITE-ProRule" id="PRU00573"/>
    </source>
</evidence>
<evidence type="ECO:0000256" key="4">
    <source>
        <dbReference type="SAM" id="MobiDB-lite"/>
    </source>
</evidence>
<evidence type="ECO:0000305" key="5"/>
<proteinExistence type="evidence at transcript level"/>
<sequence>MADTKPLHQTRFEAAVSVIQSLPKNGSFQPSNEMMLKFYSFYKQATLGPCNTARPGFWDPVGRYKWDAWNSLGDMSKEDAMIAYVDEMKKIIETMPVTDKVEELLQVIGPFYEIVEDKKHGRGSGVTSELGSVLTSTPNGKAVNGKAESSDSGAESDEEQAAAKEFKKEDEEDEEDETEHSEEEEKEVEQQPGHETSAESIVLNGLTKNSRVLITEEPTPLPTKCLSEPGDNVAIPEGEPDIQSAVINDSEADREEDCTEDMAAVQHLTSDSDSEIFCDSMEQFGQDEADHSLLLQDAMLNGDITENSAGGELKDGGEDGKQPGHGAQGKTWNGKSEHFSSRRERSLRMQPGGEGSRSGQIGSSGDGDGWGSDRGPIGNLNEQIAVVLMRLQEDMQNVLQRLHSLEVQTASQAQSLLRESNTQSVEKKPSGWPFGISPGTLALAVVWPFVVHWLMHVFLQKRRRKQT</sequence>
<name>ACBD5_XENLA</name>
<accession>Q641E3</accession>
<feature type="chain" id="PRO_0000287383" description="Acyl-CoA-binding domain-containing protein 5">
    <location>
        <begin position="1"/>
        <end position="467"/>
    </location>
</feature>
<feature type="transmembrane region" description="Helical" evidence="2">
    <location>
        <begin position="439"/>
        <end position="459"/>
    </location>
</feature>
<feature type="domain" description="ACB" evidence="3">
    <location>
        <begin position="8"/>
        <end position="97"/>
    </location>
</feature>
<feature type="region of interest" description="Disordered" evidence="4">
    <location>
        <begin position="119"/>
        <end position="204"/>
    </location>
</feature>
<feature type="region of interest" description="Disordered" evidence="4">
    <location>
        <begin position="219"/>
        <end position="240"/>
    </location>
</feature>
<feature type="region of interest" description="Disordered" evidence="4">
    <location>
        <begin position="304"/>
        <end position="376"/>
    </location>
</feature>
<feature type="coiled-coil region" evidence="2">
    <location>
        <begin position="382"/>
        <end position="411"/>
    </location>
</feature>
<feature type="compositionally biased region" description="Polar residues" evidence="4">
    <location>
        <begin position="125"/>
        <end position="139"/>
    </location>
</feature>
<feature type="compositionally biased region" description="Acidic residues" evidence="4">
    <location>
        <begin position="170"/>
        <end position="187"/>
    </location>
</feature>
<feature type="compositionally biased region" description="Basic and acidic residues" evidence="4">
    <location>
        <begin position="312"/>
        <end position="322"/>
    </location>
</feature>
<feature type="compositionally biased region" description="Basic and acidic residues" evidence="4">
    <location>
        <begin position="335"/>
        <end position="347"/>
    </location>
</feature>
<feature type="compositionally biased region" description="Gly residues" evidence="4">
    <location>
        <begin position="352"/>
        <end position="372"/>
    </location>
</feature>
<feature type="binding site" evidence="1">
    <location>
        <begin position="19"/>
        <end position="28"/>
    </location>
    <ligand>
        <name>an acyl-CoA</name>
        <dbReference type="ChEBI" id="CHEBI:58342"/>
    </ligand>
</feature>
<feature type="binding site" evidence="1">
    <location>
        <begin position="39"/>
        <end position="43"/>
    </location>
    <ligand>
        <name>an acyl-CoA</name>
        <dbReference type="ChEBI" id="CHEBI:58342"/>
    </ligand>
</feature>
<feature type="binding site" evidence="1">
    <location>
        <position position="65"/>
    </location>
    <ligand>
        <name>an acyl-CoA</name>
        <dbReference type="ChEBI" id="CHEBI:58342"/>
    </ligand>
</feature>
<feature type="binding site" evidence="1">
    <location>
        <position position="84"/>
    </location>
    <ligand>
        <name>an acyl-CoA</name>
        <dbReference type="ChEBI" id="CHEBI:58342"/>
    </ligand>
</feature>
<organism>
    <name type="scientific">Xenopus laevis</name>
    <name type="common">African clawed frog</name>
    <dbReference type="NCBI Taxonomy" id="8355"/>
    <lineage>
        <taxon>Eukaryota</taxon>
        <taxon>Metazoa</taxon>
        <taxon>Chordata</taxon>
        <taxon>Craniata</taxon>
        <taxon>Vertebrata</taxon>
        <taxon>Euteleostomi</taxon>
        <taxon>Amphibia</taxon>
        <taxon>Batrachia</taxon>
        <taxon>Anura</taxon>
        <taxon>Pipoidea</taxon>
        <taxon>Pipidae</taxon>
        <taxon>Xenopodinae</taxon>
        <taxon>Xenopus</taxon>
        <taxon>Xenopus</taxon>
    </lineage>
</organism>
<gene>
    <name type="primary">acbd5</name>
</gene>
<protein>
    <recommendedName>
        <fullName>Acyl-CoA-binding domain-containing protein 5</fullName>
    </recommendedName>
</protein>